<proteinExistence type="inferred from homology"/>
<keyword id="KW-0665">Pyrimidine biosynthesis</keyword>
<keyword id="KW-0808">Transferase</keyword>
<feature type="chain" id="PRO_0000321187" description="Aspartate carbamoyltransferase catalytic subunit">
    <location>
        <begin position="1"/>
        <end position="298"/>
    </location>
</feature>
<feature type="binding site" evidence="1">
    <location>
        <position position="50"/>
    </location>
    <ligand>
        <name>carbamoyl phosphate</name>
        <dbReference type="ChEBI" id="CHEBI:58228"/>
    </ligand>
</feature>
<feature type="binding site" evidence="1">
    <location>
        <position position="51"/>
    </location>
    <ligand>
        <name>carbamoyl phosphate</name>
        <dbReference type="ChEBI" id="CHEBI:58228"/>
    </ligand>
</feature>
<feature type="binding site" evidence="1">
    <location>
        <position position="79"/>
    </location>
    <ligand>
        <name>L-aspartate</name>
        <dbReference type="ChEBI" id="CHEBI:29991"/>
    </ligand>
</feature>
<feature type="binding site" evidence="1">
    <location>
        <position position="100"/>
    </location>
    <ligand>
        <name>carbamoyl phosphate</name>
        <dbReference type="ChEBI" id="CHEBI:58228"/>
    </ligand>
</feature>
<feature type="binding site" evidence="1">
    <location>
        <position position="128"/>
    </location>
    <ligand>
        <name>carbamoyl phosphate</name>
        <dbReference type="ChEBI" id="CHEBI:58228"/>
    </ligand>
</feature>
<feature type="binding site" evidence="1">
    <location>
        <position position="131"/>
    </location>
    <ligand>
        <name>carbamoyl phosphate</name>
        <dbReference type="ChEBI" id="CHEBI:58228"/>
    </ligand>
</feature>
<feature type="binding site" evidence="1">
    <location>
        <position position="160"/>
    </location>
    <ligand>
        <name>L-aspartate</name>
        <dbReference type="ChEBI" id="CHEBI:29991"/>
    </ligand>
</feature>
<feature type="binding site" evidence="1">
    <location>
        <position position="221"/>
    </location>
    <ligand>
        <name>L-aspartate</name>
        <dbReference type="ChEBI" id="CHEBI:29991"/>
    </ligand>
</feature>
<feature type="binding site" evidence="1">
    <location>
        <position position="260"/>
    </location>
    <ligand>
        <name>carbamoyl phosphate</name>
        <dbReference type="ChEBI" id="CHEBI:58228"/>
    </ligand>
</feature>
<feature type="binding site" evidence="1">
    <location>
        <position position="261"/>
    </location>
    <ligand>
        <name>carbamoyl phosphate</name>
        <dbReference type="ChEBI" id="CHEBI:58228"/>
    </ligand>
</feature>
<sequence>MYHIISIRDFERSDLDYLLDRAQEFDTGKYRPGMLDDKLVALLFFEPSTRTRMSFATAMARLGGRSISVDSVEASSIVKGETLADTIRVVSGYADAIVLRHPKEGAARLASEFATVPVINAGDGAGQHPSQTLLDLYTIRQSMPVDGIDVGLLGDLRYGRTAHSLALALSLYGVTLHTIAPVGLEMPANIALELRERGMEVVEHPNVEEAIRELDVLYVTRIQRERFPDSASYYNVASSYRITTDLLDGVKERLMILHPLPRAGEIDPAVDRTPYARYFEQARNGVPIRMALLHEVMK</sequence>
<gene>
    <name evidence="1" type="primary">pyrB</name>
    <name type="ordered locus">Memar_1689</name>
</gene>
<name>PYRB_METMJ</name>
<reference key="1">
    <citation type="journal article" date="2009" name="Stand. Genomic Sci.">
        <title>Complete genome sequence of Methanoculleus marisnigri Romesser et al. 1981 type strain JR1.</title>
        <authorList>
            <person name="Anderson I.J."/>
            <person name="Sieprawska-Lupa M."/>
            <person name="Lapidus A."/>
            <person name="Nolan M."/>
            <person name="Copeland A."/>
            <person name="Glavina Del Rio T."/>
            <person name="Tice H."/>
            <person name="Dalin E."/>
            <person name="Barry K."/>
            <person name="Saunders E."/>
            <person name="Han C."/>
            <person name="Brettin T."/>
            <person name="Detter J.C."/>
            <person name="Bruce D."/>
            <person name="Mikhailova N."/>
            <person name="Pitluck S."/>
            <person name="Hauser L."/>
            <person name="Land M."/>
            <person name="Lucas S."/>
            <person name="Richardson P."/>
            <person name="Whitman W.B."/>
            <person name="Kyrpides N.C."/>
        </authorList>
    </citation>
    <scope>NUCLEOTIDE SEQUENCE [LARGE SCALE GENOMIC DNA]</scope>
    <source>
        <strain>ATCC 35101 / DSM 1498 / JR1</strain>
    </source>
</reference>
<evidence type="ECO:0000255" key="1">
    <source>
        <dbReference type="HAMAP-Rule" id="MF_00001"/>
    </source>
</evidence>
<organism>
    <name type="scientific">Methanoculleus marisnigri (strain ATCC 35101 / DSM 1498 / JR1)</name>
    <dbReference type="NCBI Taxonomy" id="368407"/>
    <lineage>
        <taxon>Archaea</taxon>
        <taxon>Methanobacteriati</taxon>
        <taxon>Methanobacteriota</taxon>
        <taxon>Stenosarchaea group</taxon>
        <taxon>Methanomicrobia</taxon>
        <taxon>Methanomicrobiales</taxon>
        <taxon>Methanomicrobiaceae</taxon>
        <taxon>Methanoculleus</taxon>
    </lineage>
</organism>
<protein>
    <recommendedName>
        <fullName evidence="1">Aspartate carbamoyltransferase catalytic subunit</fullName>
        <ecNumber evidence="1">2.1.3.2</ecNumber>
    </recommendedName>
    <alternativeName>
        <fullName evidence="1">Aspartate transcarbamylase</fullName>
        <shortName evidence="1">ATCase</shortName>
    </alternativeName>
</protein>
<dbReference type="EC" id="2.1.3.2" evidence="1"/>
<dbReference type="EMBL" id="CP000562">
    <property type="protein sequence ID" value="ABN57616.1"/>
    <property type="molecule type" value="Genomic_DNA"/>
</dbReference>
<dbReference type="RefSeq" id="WP_011844527.1">
    <property type="nucleotide sequence ID" value="NC_009051.1"/>
</dbReference>
<dbReference type="SMR" id="A3CW66"/>
<dbReference type="STRING" id="368407.Memar_1689"/>
<dbReference type="GeneID" id="4847953"/>
<dbReference type="GeneID" id="76729759"/>
<dbReference type="KEGG" id="mem:Memar_1689"/>
<dbReference type="eggNOG" id="arCOG00911">
    <property type="taxonomic scope" value="Archaea"/>
</dbReference>
<dbReference type="HOGENOM" id="CLU_043846_1_2_2"/>
<dbReference type="OrthoDB" id="7792at2157"/>
<dbReference type="UniPathway" id="UPA00070">
    <property type="reaction ID" value="UER00116"/>
</dbReference>
<dbReference type="Proteomes" id="UP000002146">
    <property type="component" value="Chromosome"/>
</dbReference>
<dbReference type="GO" id="GO:0016597">
    <property type="term" value="F:amino acid binding"/>
    <property type="evidence" value="ECO:0007669"/>
    <property type="project" value="InterPro"/>
</dbReference>
<dbReference type="GO" id="GO:0004070">
    <property type="term" value="F:aspartate carbamoyltransferase activity"/>
    <property type="evidence" value="ECO:0007669"/>
    <property type="project" value="UniProtKB-UniRule"/>
</dbReference>
<dbReference type="GO" id="GO:0006207">
    <property type="term" value="P:'de novo' pyrimidine nucleobase biosynthetic process"/>
    <property type="evidence" value="ECO:0007669"/>
    <property type="project" value="InterPro"/>
</dbReference>
<dbReference type="GO" id="GO:0044205">
    <property type="term" value="P:'de novo' UMP biosynthetic process"/>
    <property type="evidence" value="ECO:0007669"/>
    <property type="project" value="UniProtKB-UniRule"/>
</dbReference>
<dbReference type="GO" id="GO:0006520">
    <property type="term" value="P:amino acid metabolic process"/>
    <property type="evidence" value="ECO:0007669"/>
    <property type="project" value="InterPro"/>
</dbReference>
<dbReference type="FunFam" id="3.40.50.1370:FF:000001">
    <property type="entry name" value="Aspartate carbamoyltransferase"/>
    <property type="match status" value="1"/>
</dbReference>
<dbReference type="FunFam" id="3.40.50.1370:FF:000002">
    <property type="entry name" value="Aspartate carbamoyltransferase 2"/>
    <property type="match status" value="1"/>
</dbReference>
<dbReference type="Gene3D" id="3.40.50.1370">
    <property type="entry name" value="Aspartate/ornithine carbamoyltransferase"/>
    <property type="match status" value="2"/>
</dbReference>
<dbReference type="HAMAP" id="MF_00001">
    <property type="entry name" value="Asp_carb_tr"/>
    <property type="match status" value="1"/>
</dbReference>
<dbReference type="InterPro" id="IPR006132">
    <property type="entry name" value="Asp/Orn_carbamoyltranf_P-bd"/>
</dbReference>
<dbReference type="InterPro" id="IPR006130">
    <property type="entry name" value="Asp/Orn_carbamoylTrfase"/>
</dbReference>
<dbReference type="InterPro" id="IPR036901">
    <property type="entry name" value="Asp/Orn_carbamoylTrfase_sf"/>
</dbReference>
<dbReference type="InterPro" id="IPR002082">
    <property type="entry name" value="Asp_carbamoyltransf"/>
</dbReference>
<dbReference type="InterPro" id="IPR006131">
    <property type="entry name" value="Asp_carbamoyltransf_Asp/Orn-bd"/>
</dbReference>
<dbReference type="NCBIfam" id="TIGR00670">
    <property type="entry name" value="asp_carb_tr"/>
    <property type="match status" value="1"/>
</dbReference>
<dbReference type="NCBIfam" id="NF002032">
    <property type="entry name" value="PRK00856.1"/>
    <property type="match status" value="1"/>
</dbReference>
<dbReference type="PANTHER" id="PTHR45753:SF6">
    <property type="entry name" value="ASPARTATE CARBAMOYLTRANSFERASE"/>
    <property type="match status" value="1"/>
</dbReference>
<dbReference type="PANTHER" id="PTHR45753">
    <property type="entry name" value="ORNITHINE CARBAMOYLTRANSFERASE, MITOCHONDRIAL"/>
    <property type="match status" value="1"/>
</dbReference>
<dbReference type="Pfam" id="PF00185">
    <property type="entry name" value="OTCace"/>
    <property type="match status" value="1"/>
</dbReference>
<dbReference type="Pfam" id="PF02729">
    <property type="entry name" value="OTCace_N"/>
    <property type="match status" value="1"/>
</dbReference>
<dbReference type="PRINTS" id="PR00100">
    <property type="entry name" value="AOTCASE"/>
</dbReference>
<dbReference type="PRINTS" id="PR00101">
    <property type="entry name" value="ATCASE"/>
</dbReference>
<dbReference type="SUPFAM" id="SSF53671">
    <property type="entry name" value="Aspartate/ornithine carbamoyltransferase"/>
    <property type="match status" value="1"/>
</dbReference>
<dbReference type="PROSITE" id="PS00097">
    <property type="entry name" value="CARBAMOYLTRANSFERASE"/>
    <property type="match status" value="1"/>
</dbReference>
<accession>A3CW66</accession>
<comment type="function">
    <text evidence="1">Catalyzes the condensation of carbamoyl phosphate and aspartate to form carbamoyl aspartate and inorganic phosphate, the committed step in the de novo pyrimidine nucleotide biosynthesis pathway.</text>
</comment>
<comment type="catalytic activity">
    <reaction evidence="1">
        <text>carbamoyl phosphate + L-aspartate = N-carbamoyl-L-aspartate + phosphate + H(+)</text>
        <dbReference type="Rhea" id="RHEA:20013"/>
        <dbReference type="ChEBI" id="CHEBI:15378"/>
        <dbReference type="ChEBI" id="CHEBI:29991"/>
        <dbReference type="ChEBI" id="CHEBI:32814"/>
        <dbReference type="ChEBI" id="CHEBI:43474"/>
        <dbReference type="ChEBI" id="CHEBI:58228"/>
        <dbReference type="EC" id="2.1.3.2"/>
    </reaction>
</comment>
<comment type="pathway">
    <text evidence="1">Pyrimidine metabolism; UMP biosynthesis via de novo pathway; (S)-dihydroorotate from bicarbonate: step 2/3.</text>
</comment>
<comment type="subunit">
    <text evidence="1">Heterooligomer of catalytic and regulatory chains.</text>
</comment>
<comment type="similarity">
    <text evidence="1">Belongs to the aspartate/ornithine carbamoyltransferase superfamily. ATCase family.</text>
</comment>